<dbReference type="EC" id="2.7.8.8"/>
<dbReference type="EMBL" id="AE000516">
    <property type="protein sequence ID" value="AAK44675.1"/>
    <property type="status" value="ALT_INIT"/>
    <property type="molecule type" value="Genomic_DNA"/>
</dbReference>
<dbReference type="PIR" id="B70632">
    <property type="entry name" value="B70632"/>
</dbReference>
<dbReference type="RefSeq" id="WP_003402213.1">
    <property type="nucleotide sequence ID" value="NZ_KK341227.1"/>
</dbReference>
<dbReference type="SMR" id="P9WPG0"/>
<dbReference type="GeneID" id="45424397"/>
<dbReference type="KEGG" id="mtc:MT0452"/>
<dbReference type="PATRIC" id="fig|83331.31.peg.479"/>
<dbReference type="HOGENOM" id="CLU_049944_1_1_11"/>
<dbReference type="Proteomes" id="UP000001020">
    <property type="component" value="Chromosome"/>
</dbReference>
<dbReference type="GO" id="GO:0005886">
    <property type="term" value="C:plasma membrane"/>
    <property type="evidence" value="ECO:0007669"/>
    <property type="project" value="UniProtKB-SubCell"/>
</dbReference>
<dbReference type="GO" id="GO:0003882">
    <property type="term" value="F:CDP-diacylglycerol-serine O-phosphatidyltransferase activity"/>
    <property type="evidence" value="ECO:0007669"/>
    <property type="project" value="UniProtKB-EC"/>
</dbReference>
<dbReference type="GO" id="GO:0008654">
    <property type="term" value="P:phospholipid biosynthetic process"/>
    <property type="evidence" value="ECO:0007669"/>
    <property type="project" value="UniProtKB-KW"/>
</dbReference>
<dbReference type="FunFam" id="1.20.120.1760:FF:000025">
    <property type="entry name" value="CDP-diacylglycerol--serine o-phosphatidyltransferase PssA"/>
    <property type="match status" value="1"/>
</dbReference>
<dbReference type="Gene3D" id="1.20.120.1760">
    <property type="match status" value="1"/>
</dbReference>
<dbReference type="InterPro" id="IPR050324">
    <property type="entry name" value="CDP-alcohol_PTase-I"/>
</dbReference>
<dbReference type="InterPro" id="IPR004533">
    <property type="entry name" value="CDP-diaglyc--ser_O-PTrfase"/>
</dbReference>
<dbReference type="InterPro" id="IPR000462">
    <property type="entry name" value="CDP-OH_P_trans"/>
</dbReference>
<dbReference type="InterPro" id="IPR043130">
    <property type="entry name" value="CDP-OH_PTrfase_TM_dom"/>
</dbReference>
<dbReference type="InterPro" id="IPR048254">
    <property type="entry name" value="CDP_ALCOHOL_P_TRANSF_CS"/>
</dbReference>
<dbReference type="NCBIfam" id="TIGR00473">
    <property type="entry name" value="pssA"/>
    <property type="match status" value="1"/>
</dbReference>
<dbReference type="PANTHER" id="PTHR14269">
    <property type="entry name" value="CDP-DIACYLGLYCEROL--GLYCEROL-3-PHOSPHATE 3-PHOSPHATIDYLTRANSFERASE-RELATED"/>
    <property type="match status" value="1"/>
</dbReference>
<dbReference type="PANTHER" id="PTHR14269:SF61">
    <property type="entry name" value="CDP-DIACYLGLYCEROL--SERINE O-PHOSPHATIDYLTRANSFERASE"/>
    <property type="match status" value="1"/>
</dbReference>
<dbReference type="Pfam" id="PF01066">
    <property type="entry name" value="CDP-OH_P_transf"/>
    <property type="match status" value="1"/>
</dbReference>
<dbReference type="PROSITE" id="PS00379">
    <property type="entry name" value="CDP_ALCOHOL_P_TRANSF"/>
    <property type="match status" value="1"/>
</dbReference>
<protein>
    <recommendedName>
        <fullName>CDP-diacylglycerol--serine O-phosphatidyltransferase</fullName>
        <ecNumber>2.7.8.8</ecNumber>
    </recommendedName>
    <alternativeName>
        <fullName>Phosphatidylserine synthase</fullName>
    </alternativeName>
</protein>
<reference key="1">
    <citation type="journal article" date="2002" name="J. Bacteriol.">
        <title>Whole-genome comparison of Mycobacterium tuberculosis clinical and laboratory strains.</title>
        <authorList>
            <person name="Fleischmann R.D."/>
            <person name="Alland D."/>
            <person name="Eisen J.A."/>
            <person name="Carpenter L."/>
            <person name="White O."/>
            <person name="Peterson J.D."/>
            <person name="DeBoy R.T."/>
            <person name="Dodson R.J."/>
            <person name="Gwinn M.L."/>
            <person name="Haft D.H."/>
            <person name="Hickey E.K."/>
            <person name="Kolonay J.F."/>
            <person name="Nelson W.C."/>
            <person name="Umayam L.A."/>
            <person name="Ermolaeva M.D."/>
            <person name="Salzberg S.L."/>
            <person name="Delcher A."/>
            <person name="Utterback T.R."/>
            <person name="Weidman J.F."/>
            <person name="Khouri H.M."/>
            <person name="Gill J."/>
            <person name="Mikula A."/>
            <person name="Bishai W."/>
            <person name="Jacobs W.R. Jr."/>
            <person name="Venter J.C."/>
            <person name="Fraser C.M."/>
        </authorList>
    </citation>
    <scope>NUCLEOTIDE SEQUENCE [LARGE SCALE GENOMIC DNA]</scope>
    <source>
        <strain>CDC 1551 / Oshkosh</strain>
    </source>
</reference>
<accession>P9WPG0</accession>
<accession>L0T6N4</accession>
<accession>P96282</accession>
<organism>
    <name type="scientific">Mycobacterium tuberculosis (strain CDC 1551 / Oshkosh)</name>
    <dbReference type="NCBI Taxonomy" id="83331"/>
    <lineage>
        <taxon>Bacteria</taxon>
        <taxon>Bacillati</taxon>
        <taxon>Actinomycetota</taxon>
        <taxon>Actinomycetes</taxon>
        <taxon>Mycobacteriales</taxon>
        <taxon>Mycobacteriaceae</taxon>
        <taxon>Mycobacterium</taxon>
        <taxon>Mycobacterium tuberculosis complex</taxon>
    </lineage>
</organism>
<keyword id="KW-1003">Cell membrane</keyword>
<keyword id="KW-0444">Lipid biosynthesis</keyword>
<keyword id="KW-0443">Lipid metabolism</keyword>
<keyword id="KW-0472">Membrane</keyword>
<keyword id="KW-0594">Phospholipid biosynthesis</keyword>
<keyword id="KW-1208">Phospholipid metabolism</keyword>
<keyword id="KW-1185">Reference proteome</keyword>
<keyword id="KW-0808">Transferase</keyword>
<keyword id="KW-0812">Transmembrane</keyword>
<keyword id="KW-1133">Transmembrane helix</keyword>
<evidence type="ECO:0000255" key="1"/>
<evidence type="ECO:0000305" key="2"/>
<sequence>MIGKPRGRRGVNLQILPSAMTVLSICAGLTAIKFALEHQPKAAMALIAAAAILDGLDGRVARILDAQSRMGAEIDSLADAVNFGVTPALVLYVSMLSKWPVGWVVVLLYAVCVVLRLARYNALQDDGTQPAYAHEFFVGMPAPAGAVSMIGLLALKMQFGEGWWTSVWFLSFWVTGTSILLVSGIPMKKMHAVSVPPNYAAALLAVLAICAAAAVLAPYLLIWVIIIAYMCHIPFAVRSQRWLAQHPEVWDDKPKQRRAVRRASRRAHPYRPSMARLGLRKPGRRL</sequence>
<name>PSS_MYCTO</name>
<comment type="catalytic activity">
    <reaction>
        <text>a CDP-1,2-diacyl-sn-glycerol + L-serine = a 1,2-diacyl-sn-glycero-3-phospho-L-serine + CMP + H(+)</text>
        <dbReference type="Rhea" id="RHEA:16913"/>
        <dbReference type="ChEBI" id="CHEBI:15378"/>
        <dbReference type="ChEBI" id="CHEBI:33384"/>
        <dbReference type="ChEBI" id="CHEBI:57262"/>
        <dbReference type="ChEBI" id="CHEBI:58332"/>
        <dbReference type="ChEBI" id="CHEBI:60377"/>
        <dbReference type="EC" id="2.7.8.8"/>
    </reaction>
</comment>
<comment type="subcellular location">
    <subcellularLocation>
        <location evidence="2">Cell membrane</location>
        <topology evidence="2">Multi-pass membrane protein</topology>
    </subcellularLocation>
</comment>
<comment type="similarity">
    <text evidence="2">Belongs to the CDP-alcohol phosphatidyltransferase class-I family.</text>
</comment>
<comment type="sequence caution" evidence="2">
    <conflict type="erroneous initiation">
        <sequence resource="EMBL-CDS" id="AAK44675"/>
    </conflict>
</comment>
<feature type="chain" id="PRO_0000426958" description="CDP-diacylglycerol--serine O-phosphatidyltransferase">
    <location>
        <begin position="1"/>
        <end position="286"/>
    </location>
</feature>
<feature type="transmembrane region" description="Helical" evidence="1">
    <location>
        <begin position="15"/>
        <end position="35"/>
    </location>
</feature>
<feature type="transmembrane region" description="Helical" evidence="1">
    <location>
        <begin position="74"/>
        <end position="94"/>
    </location>
</feature>
<feature type="transmembrane region" description="Helical" evidence="1">
    <location>
        <begin position="95"/>
        <end position="115"/>
    </location>
</feature>
<feature type="transmembrane region" description="Helical" evidence="1">
    <location>
        <begin position="135"/>
        <end position="155"/>
    </location>
</feature>
<feature type="transmembrane region" description="Helical" evidence="1">
    <location>
        <begin position="167"/>
        <end position="187"/>
    </location>
</feature>
<feature type="transmembrane region" description="Helical" evidence="1">
    <location>
        <begin position="207"/>
        <end position="227"/>
    </location>
</feature>
<gene>
    <name type="primary">pssA</name>
    <name type="ordered locus">MT0452</name>
</gene>
<proteinExistence type="inferred from homology"/>